<organism>
    <name type="scientific">Pseudoalteromonas atlantica (strain T6c / ATCC BAA-1087)</name>
    <dbReference type="NCBI Taxonomy" id="3042615"/>
    <lineage>
        <taxon>Bacteria</taxon>
        <taxon>Pseudomonadati</taxon>
        <taxon>Pseudomonadota</taxon>
        <taxon>Gammaproteobacteria</taxon>
        <taxon>Alteromonadales</taxon>
        <taxon>Alteromonadaceae</taxon>
        <taxon>Paraglaciecola</taxon>
    </lineage>
</organism>
<feature type="chain" id="PRO_0000288202" description="tRNA (guanine-N(7)-)-methyltransferase">
    <location>
        <begin position="1"/>
        <end position="239"/>
    </location>
</feature>
<feature type="active site" evidence="1">
    <location>
        <position position="144"/>
    </location>
</feature>
<feature type="binding site" evidence="2">
    <location>
        <position position="69"/>
    </location>
    <ligand>
        <name>S-adenosyl-L-methionine</name>
        <dbReference type="ChEBI" id="CHEBI:59789"/>
    </ligand>
</feature>
<feature type="binding site" evidence="2">
    <location>
        <position position="94"/>
    </location>
    <ligand>
        <name>S-adenosyl-L-methionine</name>
        <dbReference type="ChEBI" id="CHEBI:59789"/>
    </ligand>
</feature>
<feature type="binding site" evidence="2">
    <location>
        <position position="121"/>
    </location>
    <ligand>
        <name>S-adenosyl-L-methionine</name>
        <dbReference type="ChEBI" id="CHEBI:59789"/>
    </ligand>
</feature>
<feature type="binding site" evidence="2">
    <location>
        <position position="144"/>
    </location>
    <ligand>
        <name>S-adenosyl-L-methionine</name>
        <dbReference type="ChEBI" id="CHEBI:59789"/>
    </ligand>
</feature>
<feature type="binding site" evidence="2">
    <location>
        <position position="148"/>
    </location>
    <ligand>
        <name>substrate</name>
    </ligand>
</feature>
<feature type="binding site" evidence="2">
    <location>
        <position position="180"/>
    </location>
    <ligand>
        <name>substrate</name>
    </ligand>
</feature>
<feature type="binding site" evidence="2">
    <location>
        <begin position="217"/>
        <end position="220"/>
    </location>
    <ligand>
        <name>substrate</name>
    </ligand>
</feature>
<accession>Q15ZS8</accession>
<reference key="1">
    <citation type="submission" date="2006-06" db="EMBL/GenBank/DDBJ databases">
        <title>Complete sequence of Pseudoalteromonas atlantica T6c.</title>
        <authorList>
            <consortium name="US DOE Joint Genome Institute"/>
            <person name="Copeland A."/>
            <person name="Lucas S."/>
            <person name="Lapidus A."/>
            <person name="Barry K."/>
            <person name="Detter J.C."/>
            <person name="Glavina del Rio T."/>
            <person name="Hammon N."/>
            <person name="Israni S."/>
            <person name="Dalin E."/>
            <person name="Tice H."/>
            <person name="Pitluck S."/>
            <person name="Saunders E."/>
            <person name="Brettin T."/>
            <person name="Bruce D."/>
            <person name="Han C."/>
            <person name="Tapia R."/>
            <person name="Gilna P."/>
            <person name="Schmutz J."/>
            <person name="Larimer F."/>
            <person name="Land M."/>
            <person name="Hauser L."/>
            <person name="Kyrpides N."/>
            <person name="Kim E."/>
            <person name="Karls A.C."/>
            <person name="Bartlett D."/>
            <person name="Higgins B.P."/>
            <person name="Richardson P."/>
        </authorList>
    </citation>
    <scope>NUCLEOTIDE SEQUENCE [LARGE SCALE GENOMIC DNA]</scope>
    <source>
        <strain>T6c / ATCC BAA-1087</strain>
    </source>
</reference>
<evidence type="ECO:0000250" key="1"/>
<evidence type="ECO:0000255" key="2">
    <source>
        <dbReference type="HAMAP-Rule" id="MF_01057"/>
    </source>
</evidence>
<name>TRMB_PSEA6</name>
<dbReference type="EC" id="2.1.1.33" evidence="2"/>
<dbReference type="EMBL" id="CP000388">
    <property type="protein sequence ID" value="ABG38610.1"/>
    <property type="molecule type" value="Genomic_DNA"/>
</dbReference>
<dbReference type="RefSeq" id="WP_011573020.1">
    <property type="nucleotide sequence ID" value="NC_008228.1"/>
</dbReference>
<dbReference type="SMR" id="Q15ZS8"/>
<dbReference type="STRING" id="342610.Patl_0078"/>
<dbReference type="KEGG" id="pat:Patl_0078"/>
<dbReference type="eggNOG" id="COG0220">
    <property type="taxonomic scope" value="Bacteria"/>
</dbReference>
<dbReference type="HOGENOM" id="CLU_050910_0_1_6"/>
<dbReference type="OrthoDB" id="9802090at2"/>
<dbReference type="UniPathway" id="UPA00989"/>
<dbReference type="Proteomes" id="UP000001981">
    <property type="component" value="Chromosome"/>
</dbReference>
<dbReference type="GO" id="GO:0043527">
    <property type="term" value="C:tRNA methyltransferase complex"/>
    <property type="evidence" value="ECO:0007669"/>
    <property type="project" value="TreeGrafter"/>
</dbReference>
<dbReference type="GO" id="GO:0008176">
    <property type="term" value="F:tRNA (guanine(46)-N7)-methyltransferase activity"/>
    <property type="evidence" value="ECO:0007669"/>
    <property type="project" value="UniProtKB-UniRule"/>
</dbReference>
<dbReference type="FunFam" id="3.40.50.150:FF:000024">
    <property type="entry name" value="tRNA (guanine-N(7)-)-methyltransferase"/>
    <property type="match status" value="1"/>
</dbReference>
<dbReference type="Gene3D" id="3.40.50.150">
    <property type="entry name" value="Vaccinia Virus protein VP39"/>
    <property type="match status" value="1"/>
</dbReference>
<dbReference type="HAMAP" id="MF_01057">
    <property type="entry name" value="tRNA_methyltr_TrmB"/>
    <property type="match status" value="1"/>
</dbReference>
<dbReference type="InterPro" id="IPR029063">
    <property type="entry name" value="SAM-dependent_MTases_sf"/>
</dbReference>
<dbReference type="InterPro" id="IPR003358">
    <property type="entry name" value="tRNA_(Gua-N-7)_MeTrfase_Trmb"/>
</dbReference>
<dbReference type="InterPro" id="IPR055361">
    <property type="entry name" value="tRNA_methyltr_TrmB_bact"/>
</dbReference>
<dbReference type="NCBIfam" id="TIGR00091">
    <property type="entry name" value="tRNA (guanosine(46)-N7)-methyltransferase TrmB"/>
    <property type="match status" value="1"/>
</dbReference>
<dbReference type="PANTHER" id="PTHR23417">
    <property type="entry name" value="3-DEOXY-D-MANNO-OCTULOSONIC-ACID TRANSFERASE/TRNA GUANINE-N 7 - -METHYLTRANSFERASE"/>
    <property type="match status" value="1"/>
</dbReference>
<dbReference type="PANTHER" id="PTHR23417:SF14">
    <property type="entry name" value="PENTACOTRIPEPTIDE-REPEAT REGION OF PRORP DOMAIN-CONTAINING PROTEIN"/>
    <property type="match status" value="1"/>
</dbReference>
<dbReference type="Pfam" id="PF02390">
    <property type="entry name" value="Methyltransf_4"/>
    <property type="match status" value="1"/>
</dbReference>
<dbReference type="SUPFAM" id="SSF53335">
    <property type="entry name" value="S-adenosyl-L-methionine-dependent methyltransferases"/>
    <property type="match status" value="1"/>
</dbReference>
<dbReference type="PROSITE" id="PS51625">
    <property type="entry name" value="SAM_MT_TRMB"/>
    <property type="match status" value="1"/>
</dbReference>
<protein>
    <recommendedName>
        <fullName evidence="2">tRNA (guanine-N(7)-)-methyltransferase</fullName>
        <ecNumber evidence="2">2.1.1.33</ecNumber>
    </recommendedName>
    <alternativeName>
        <fullName evidence="2">tRNA (guanine(46)-N(7))-methyltransferase</fullName>
    </alternativeName>
    <alternativeName>
        <fullName evidence="2">tRNA(m7G46)-methyltransferase</fullName>
    </alternativeName>
</protein>
<proteinExistence type="inferred from homology"/>
<keyword id="KW-0489">Methyltransferase</keyword>
<keyword id="KW-0949">S-adenosyl-L-methionine</keyword>
<keyword id="KW-0808">Transferase</keyword>
<keyword id="KW-0819">tRNA processing</keyword>
<gene>
    <name evidence="2" type="primary">trmB</name>
    <name type="ordered locus">Patl_0078</name>
</gene>
<sequence length="239" mass="27136">MSQFKSKEEAAESGVYIRKIQSFVKREGRLTKGQEKAIESNWETMGLEHKSGLLDMNEVFGRTAPVVLEIGFGMGKSLVTMAKNEPDKDFIGIEVHRPGIGACLADAQEQGVTNLRVYEHDAVEVLADCIADGSLSRMQLFFPDPWHKKRHHKRRIVQPEFVEKLRGKLAIGGVFHMATDWENYAEHMLEIMAVAPGYKNLSSTSDYVPRPEQRPLTKFEQRGHRLGHGVWDLMFERVA</sequence>
<comment type="function">
    <text evidence="2">Catalyzes the formation of N(7)-methylguanine at position 46 (m7G46) in tRNA.</text>
</comment>
<comment type="catalytic activity">
    <reaction evidence="2">
        <text>guanosine(46) in tRNA + S-adenosyl-L-methionine = N(7)-methylguanosine(46) in tRNA + S-adenosyl-L-homocysteine</text>
        <dbReference type="Rhea" id="RHEA:42708"/>
        <dbReference type="Rhea" id="RHEA-COMP:10188"/>
        <dbReference type="Rhea" id="RHEA-COMP:10189"/>
        <dbReference type="ChEBI" id="CHEBI:57856"/>
        <dbReference type="ChEBI" id="CHEBI:59789"/>
        <dbReference type="ChEBI" id="CHEBI:74269"/>
        <dbReference type="ChEBI" id="CHEBI:74480"/>
        <dbReference type="EC" id="2.1.1.33"/>
    </reaction>
</comment>
<comment type="pathway">
    <text evidence="2">tRNA modification; N(7)-methylguanine-tRNA biosynthesis.</text>
</comment>
<comment type="similarity">
    <text evidence="2">Belongs to the class I-like SAM-binding methyltransferase superfamily. TrmB family.</text>
</comment>